<organism>
    <name type="scientific">Xylella fastidiosa (strain M23)</name>
    <dbReference type="NCBI Taxonomy" id="405441"/>
    <lineage>
        <taxon>Bacteria</taxon>
        <taxon>Pseudomonadati</taxon>
        <taxon>Pseudomonadota</taxon>
        <taxon>Gammaproteobacteria</taxon>
        <taxon>Lysobacterales</taxon>
        <taxon>Lysobacteraceae</taxon>
        <taxon>Xylella</taxon>
    </lineage>
</organism>
<evidence type="ECO:0000255" key="1">
    <source>
        <dbReference type="HAMAP-Rule" id="MF_00268"/>
    </source>
</evidence>
<evidence type="ECO:0000256" key="2">
    <source>
        <dbReference type="SAM" id="MobiDB-lite"/>
    </source>
</evidence>
<proteinExistence type="inferred from homology"/>
<feature type="chain" id="PRO_1000114384" description="Protein RecA">
    <location>
        <begin position="1"/>
        <end position="347"/>
    </location>
</feature>
<feature type="region of interest" description="Disordered" evidence="2">
    <location>
        <begin position="327"/>
        <end position="347"/>
    </location>
</feature>
<feature type="compositionally biased region" description="Basic and acidic residues" evidence="2">
    <location>
        <begin position="327"/>
        <end position="336"/>
    </location>
</feature>
<feature type="compositionally biased region" description="Acidic residues" evidence="2">
    <location>
        <begin position="337"/>
        <end position="347"/>
    </location>
</feature>
<feature type="binding site" evidence="1">
    <location>
        <begin position="65"/>
        <end position="72"/>
    </location>
    <ligand>
        <name>ATP</name>
        <dbReference type="ChEBI" id="CHEBI:30616"/>
    </ligand>
</feature>
<protein>
    <recommendedName>
        <fullName evidence="1">Protein RecA</fullName>
    </recommendedName>
    <alternativeName>
        <fullName evidence="1">Recombinase A</fullName>
    </alternativeName>
</protein>
<reference key="1">
    <citation type="journal article" date="2010" name="J. Bacteriol.">
        <title>Whole genome sequences of two Xylella fastidiosa strains (M12 and M23) causing almond leaf scorch disease in California.</title>
        <authorList>
            <person name="Chen J."/>
            <person name="Xie G."/>
            <person name="Han S."/>
            <person name="Chertkov O."/>
            <person name="Sims D."/>
            <person name="Civerolo E.L."/>
        </authorList>
    </citation>
    <scope>NUCLEOTIDE SEQUENCE [LARGE SCALE GENOMIC DNA]</scope>
    <source>
        <strain>M23</strain>
    </source>
</reference>
<accession>B2I680</accession>
<keyword id="KW-0067">ATP-binding</keyword>
<keyword id="KW-0963">Cytoplasm</keyword>
<keyword id="KW-0227">DNA damage</keyword>
<keyword id="KW-0233">DNA recombination</keyword>
<keyword id="KW-0234">DNA repair</keyword>
<keyword id="KW-0238">DNA-binding</keyword>
<keyword id="KW-0547">Nucleotide-binding</keyword>
<keyword id="KW-0742">SOS response</keyword>
<sequence>MDENKKRALSVALSQIEKQFGKGSVMRMGDRVIEAVEAIPTGSLMLDLALGIGGLPKGRVVEIYGPESSGKTTLTLQAIAQCQKRGGTAAFIDAEHALDPIYAGKLGVNVDDLLLSQPDTGEQALEIADMLVRSGSIDIMVIDSVAALTPRAEIEGEMGDQLPGLQARLMSQALRKLTGNIKRSNTLVIFINQLRMKIGIMMPGQSPETTTGGNALKFYASVRLDIRRIGAIKKGDEIIGNQTKIKVVKNKLAPPFKQVVTEILYGEGISREGELIEMGVEAKLVEKAGAWYSYGGERIGQGKDNARGYLRENPHFAAKLEADLREKFEPTELSREEGDEDTLEDAM</sequence>
<name>RECA_XYLF2</name>
<dbReference type="EMBL" id="CP001011">
    <property type="protein sequence ID" value="ACB91543.1"/>
    <property type="molecule type" value="Genomic_DNA"/>
</dbReference>
<dbReference type="RefSeq" id="WP_004087616.1">
    <property type="nucleotide sequence ID" value="NC_010577.1"/>
</dbReference>
<dbReference type="SMR" id="B2I680"/>
<dbReference type="GeneID" id="93903784"/>
<dbReference type="KEGG" id="xfn:XfasM23_0086"/>
<dbReference type="HOGENOM" id="CLU_040469_3_2_6"/>
<dbReference type="Proteomes" id="UP000001698">
    <property type="component" value="Chromosome"/>
</dbReference>
<dbReference type="GO" id="GO:0005829">
    <property type="term" value="C:cytosol"/>
    <property type="evidence" value="ECO:0007669"/>
    <property type="project" value="TreeGrafter"/>
</dbReference>
<dbReference type="GO" id="GO:0005524">
    <property type="term" value="F:ATP binding"/>
    <property type="evidence" value="ECO:0007669"/>
    <property type="project" value="UniProtKB-UniRule"/>
</dbReference>
<dbReference type="GO" id="GO:0016887">
    <property type="term" value="F:ATP hydrolysis activity"/>
    <property type="evidence" value="ECO:0007669"/>
    <property type="project" value="InterPro"/>
</dbReference>
<dbReference type="GO" id="GO:0140664">
    <property type="term" value="F:ATP-dependent DNA damage sensor activity"/>
    <property type="evidence" value="ECO:0007669"/>
    <property type="project" value="InterPro"/>
</dbReference>
<dbReference type="GO" id="GO:0003684">
    <property type="term" value="F:damaged DNA binding"/>
    <property type="evidence" value="ECO:0007669"/>
    <property type="project" value="UniProtKB-UniRule"/>
</dbReference>
<dbReference type="GO" id="GO:0003697">
    <property type="term" value="F:single-stranded DNA binding"/>
    <property type="evidence" value="ECO:0007669"/>
    <property type="project" value="UniProtKB-UniRule"/>
</dbReference>
<dbReference type="GO" id="GO:0006310">
    <property type="term" value="P:DNA recombination"/>
    <property type="evidence" value="ECO:0007669"/>
    <property type="project" value="UniProtKB-UniRule"/>
</dbReference>
<dbReference type="GO" id="GO:0006281">
    <property type="term" value="P:DNA repair"/>
    <property type="evidence" value="ECO:0007669"/>
    <property type="project" value="UniProtKB-UniRule"/>
</dbReference>
<dbReference type="GO" id="GO:0009432">
    <property type="term" value="P:SOS response"/>
    <property type="evidence" value="ECO:0007669"/>
    <property type="project" value="UniProtKB-UniRule"/>
</dbReference>
<dbReference type="CDD" id="cd00983">
    <property type="entry name" value="RecA"/>
    <property type="match status" value="1"/>
</dbReference>
<dbReference type="FunFam" id="3.40.50.300:FF:000087">
    <property type="entry name" value="Recombinase RecA"/>
    <property type="match status" value="1"/>
</dbReference>
<dbReference type="Gene3D" id="3.40.50.300">
    <property type="entry name" value="P-loop containing nucleotide triphosphate hydrolases"/>
    <property type="match status" value="1"/>
</dbReference>
<dbReference type="HAMAP" id="MF_00268">
    <property type="entry name" value="RecA"/>
    <property type="match status" value="1"/>
</dbReference>
<dbReference type="InterPro" id="IPR003593">
    <property type="entry name" value="AAA+_ATPase"/>
</dbReference>
<dbReference type="InterPro" id="IPR013765">
    <property type="entry name" value="DNA_recomb/repair_RecA"/>
</dbReference>
<dbReference type="InterPro" id="IPR020584">
    <property type="entry name" value="DNA_recomb/repair_RecA_CS"/>
</dbReference>
<dbReference type="InterPro" id="IPR027417">
    <property type="entry name" value="P-loop_NTPase"/>
</dbReference>
<dbReference type="InterPro" id="IPR049261">
    <property type="entry name" value="RecA-like_C"/>
</dbReference>
<dbReference type="InterPro" id="IPR049428">
    <property type="entry name" value="RecA-like_N"/>
</dbReference>
<dbReference type="InterPro" id="IPR020588">
    <property type="entry name" value="RecA_ATP-bd"/>
</dbReference>
<dbReference type="InterPro" id="IPR023400">
    <property type="entry name" value="RecA_C_sf"/>
</dbReference>
<dbReference type="InterPro" id="IPR020587">
    <property type="entry name" value="RecA_monomer-monomer_interface"/>
</dbReference>
<dbReference type="NCBIfam" id="TIGR02012">
    <property type="entry name" value="tigrfam_recA"/>
    <property type="match status" value="1"/>
</dbReference>
<dbReference type="PANTHER" id="PTHR45900:SF1">
    <property type="entry name" value="MITOCHONDRIAL DNA REPAIR PROTEIN RECA HOMOLOG-RELATED"/>
    <property type="match status" value="1"/>
</dbReference>
<dbReference type="PANTHER" id="PTHR45900">
    <property type="entry name" value="RECA"/>
    <property type="match status" value="1"/>
</dbReference>
<dbReference type="Pfam" id="PF00154">
    <property type="entry name" value="RecA"/>
    <property type="match status" value="1"/>
</dbReference>
<dbReference type="Pfam" id="PF21096">
    <property type="entry name" value="RecA_C"/>
    <property type="match status" value="1"/>
</dbReference>
<dbReference type="PRINTS" id="PR00142">
    <property type="entry name" value="RECA"/>
</dbReference>
<dbReference type="SMART" id="SM00382">
    <property type="entry name" value="AAA"/>
    <property type="match status" value="1"/>
</dbReference>
<dbReference type="SUPFAM" id="SSF52540">
    <property type="entry name" value="P-loop containing nucleoside triphosphate hydrolases"/>
    <property type="match status" value="1"/>
</dbReference>
<dbReference type="SUPFAM" id="SSF54752">
    <property type="entry name" value="RecA protein, C-terminal domain"/>
    <property type="match status" value="1"/>
</dbReference>
<dbReference type="PROSITE" id="PS00321">
    <property type="entry name" value="RECA_1"/>
    <property type="match status" value="1"/>
</dbReference>
<dbReference type="PROSITE" id="PS50162">
    <property type="entry name" value="RECA_2"/>
    <property type="match status" value="1"/>
</dbReference>
<dbReference type="PROSITE" id="PS50163">
    <property type="entry name" value="RECA_3"/>
    <property type="match status" value="1"/>
</dbReference>
<gene>
    <name evidence="1" type="primary">recA</name>
    <name type="ordered locus">XfasM23_0086</name>
</gene>
<comment type="function">
    <text evidence="1">Can catalyze the hydrolysis of ATP in the presence of single-stranded DNA, the ATP-dependent uptake of single-stranded DNA by duplex DNA, and the ATP-dependent hybridization of homologous single-stranded DNAs. It interacts with LexA causing its activation and leading to its autocatalytic cleavage.</text>
</comment>
<comment type="subcellular location">
    <subcellularLocation>
        <location evidence="1">Cytoplasm</location>
    </subcellularLocation>
</comment>
<comment type="similarity">
    <text evidence="1">Belongs to the RecA family.</text>
</comment>